<name>NUDK_CROS8</name>
<feature type="chain" id="PRO_0000342479" description="GDP-mannose pyrophosphatase">
    <location>
        <begin position="1"/>
        <end position="191"/>
    </location>
</feature>
<feature type="domain" description="Nudix hydrolase" evidence="2">
    <location>
        <begin position="43"/>
        <end position="180"/>
    </location>
</feature>
<feature type="short sequence motif" description="Nudix box">
    <location>
        <begin position="86"/>
        <end position="106"/>
    </location>
</feature>
<feature type="binding site" description="in other chain" evidence="1">
    <location>
        <position position="17"/>
    </location>
    <ligand>
        <name>GDP-alpha-D-mannose</name>
        <dbReference type="ChEBI" id="CHEBI:57527"/>
        <note>ligand shared between dimeric partners</note>
    </ligand>
</feature>
<feature type="binding site" evidence="1">
    <location>
        <begin position="38"/>
        <end position="40"/>
    </location>
    <ligand>
        <name>GDP-alpha-D-mannose</name>
        <dbReference type="ChEBI" id="CHEBI:57527"/>
        <note>ligand shared between dimeric partners</note>
    </ligand>
</feature>
<feature type="binding site" description="in other chain" evidence="1">
    <location>
        <position position="67"/>
    </location>
    <ligand>
        <name>GDP-alpha-D-mannose</name>
        <dbReference type="ChEBI" id="CHEBI:57527"/>
        <note>ligand shared between dimeric partners</note>
    </ligand>
</feature>
<feature type="binding site" description="in other chain" evidence="1">
    <location>
        <begin position="85"/>
        <end position="87"/>
    </location>
    <ligand>
        <name>GDP-alpha-D-mannose</name>
        <dbReference type="ChEBI" id="CHEBI:57527"/>
        <note>ligand shared between dimeric partners</note>
    </ligand>
</feature>
<feature type="binding site" evidence="1">
    <location>
        <position position="85"/>
    </location>
    <ligand>
        <name>Mg(2+)</name>
        <dbReference type="ChEBI" id="CHEBI:18420"/>
        <label>1</label>
    </ligand>
</feature>
<feature type="binding site" evidence="1">
    <location>
        <position position="100"/>
    </location>
    <ligand>
        <name>Mg(2+)</name>
        <dbReference type="ChEBI" id="CHEBI:18420"/>
        <label>2</label>
    </ligand>
</feature>
<feature type="binding site" description="in other chain" evidence="1">
    <location>
        <position position="104"/>
    </location>
    <ligand>
        <name>GDP-alpha-D-mannose</name>
        <dbReference type="ChEBI" id="CHEBI:57527"/>
        <note>ligand shared between dimeric partners</note>
    </ligand>
</feature>
<feature type="binding site" evidence="1">
    <location>
        <position position="104"/>
    </location>
    <ligand>
        <name>Mg(2+)</name>
        <dbReference type="ChEBI" id="CHEBI:18420"/>
        <label>1</label>
    </ligand>
</feature>
<feature type="binding site" evidence="1">
    <location>
        <position position="104"/>
    </location>
    <ligand>
        <name>Mg(2+)</name>
        <dbReference type="ChEBI" id="CHEBI:18420"/>
        <label>2</label>
    </ligand>
</feature>
<feature type="binding site" description="in other chain" evidence="1">
    <location>
        <position position="127"/>
    </location>
    <ligand>
        <name>GDP-alpha-D-mannose</name>
        <dbReference type="ChEBI" id="CHEBI:57527"/>
        <note>ligand shared between dimeric partners</note>
    </ligand>
</feature>
<feature type="binding site" description="in other chain" evidence="1">
    <location>
        <begin position="150"/>
        <end position="151"/>
    </location>
    <ligand>
        <name>GDP-alpha-D-mannose</name>
        <dbReference type="ChEBI" id="CHEBI:57527"/>
        <note>ligand shared between dimeric partners</note>
    </ligand>
</feature>
<feature type="binding site" evidence="1">
    <location>
        <position position="151"/>
    </location>
    <ligand>
        <name>Mg(2+)</name>
        <dbReference type="ChEBI" id="CHEBI:18420"/>
        <label>2</label>
    </ligand>
</feature>
<feature type="binding site" description="in other chain" evidence="1">
    <location>
        <position position="176"/>
    </location>
    <ligand>
        <name>GDP-alpha-D-mannose</name>
        <dbReference type="ChEBI" id="CHEBI:57527"/>
        <note>ligand shared between dimeric partners</note>
    </ligand>
</feature>
<organism>
    <name type="scientific">Cronobacter sakazakii (strain ATCC BAA-894)</name>
    <name type="common">Enterobacter sakazakii</name>
    <dbReference type="NCBI Taxonomy" id="290339"/>
    <lineage>
        <taxon>Bacteria</taxon>
        <taxon>Pseudomonadati</taxon>
        <taxon>Pseudomonadota</taxon>
        <taxon>Gammaproteobacteria</taxon>
        <taxon>Enterobacterales</taxon>
        <taxon>Enterobacteriaceae</taxon>
        <taxon>Cronobacter</taxon>
    </lineage>
</organism>
<evidence type="ECO:0000250" key="1">
    <source>
        <dbReference type="UniProtKB" id="P37128"/>
    </source>
</evidence>
<evidence type="ECO:0000255" key="2">
    <source>
        <dbReference type="PROSITE-ProRule" id="PRU00794"/>
    </source>
</evidence>
<evidence type="ECO:0000305" key="3"/>
<sequence>MSLNVELIKDKILSENYFVLRNITYDLTRKDGEVVRHKREVYDRGNGAAVLLYNREKKSVVLIRQFRVATWVNGNPDGMLIEACAGLLDDDEPEVCIRKEAIEETGYRVNAAEKVFELYTSPGGVTELIHLFIAEYDDASRANEGGGVEDEEIEVLEMPFSEALEKVRQGVIRDAKTVLLLQHLQLRGIMD</sequence>
<dbReference type="EC" id="3.6.1.-" evidence="1"/>
<dbReference type="EMBL" id="CP000783">
    <property type="protein sequence ID" value="ABU76060.1"/>
    <property type="molecule type" value="Genomic_DNA"/>
</dbReference>
<dbReference type="RefSeq" id="WP_004386542.1">
    <property type="nucleotide sequence ID" value="NC_009778.1"/>
</dbReference>
<dbReference type="SMR" id="A7ML00"/>
<dbReference type="GeneID" id="56729669"/>
<dbReference type="KEGG" id="esa:ESA_00783"/>
<dbReference type="HOGENOM" id="CLU_062658_6_0_6"/>
<dbReference type="Proteomes" id="UP000000260">
    <property type="component" value="Chromosome"/>
</dbReference>
<dbReference type="GO" id="GO:0005829">
    <property type="term" value="C:cytosol"/>
    <property type="evidence" value="ECO:0007669"/>
    <property type="project" value="TreeGrafter"/>
</dbReference>
<dbReference type="GO" id="GO:0016818">
    <property type="term" value="F:hydrolase activity, acting on acid anhydrides, in phosphorus-containing anhydrides"/>
    <property type="evidence" value="ECO:0007669"/>
    <property type="project" value="InterPro"/>
</dbReference>
<dbReference type="GO" id="GO:0046872">
    <property type="term" value="F:metal ion binding"/>
    <property type="evidence" value="ECO:0007669"/>
    <property type="project" value="UniProtKB-KW"/>
</dbReference>
<dbReference type="GO" id="GO:0006753">
    <property type="term" value="P:nucleoside phosphate metabolic process"/>
    <property type="evidence" value="ECO:0007669"/>
    <property type="project" value="TreeGrafter"/>
</dbReference>
<dbReference type="GO" id="GO:0019693">
    <property type="term" value="P:ribose phosphate metabolic process"/>
    <property type="evidence" value="ECO:0007669"/>
    <property type="project" value="TreeGrafter"/>
</dbReference>
<dbReference type="CDD" id="cd24157">
    <property type="entry name" value="NUDIX_GDPMK"/>
    <property type="match status" value="1"/>
</dbReference>
<dbReference type="FunFam" id="3.90.79.10:FF:000010">
    <property type="entry name" value="GDP-mannose pyrophosphatase NudK"/>
    <property type="match status" value="1"/>
</dbReference>
<dbReference type="Gene3D" id="3.90.79.10">
    <property type="entry name" value="Nucleoside Triphosphate Pyrophosphohydrolase"/>
    <property type="match status" value="1"/>
</dbReference>
<dbReference type="InterPro" id="IPR004385">
    <property type="entry name" value="NDP_pyrophosphatase"/>
</dbReference>
<dbReference type="InterPro" id="IPR015797">
    <property type="entry name" value="NUDIX_hydrolase-like_dom_sf"/>
</dbReference>
<dbReference type="InterPro" id="IPR000086">
    <property type="entry name" value="NUDIX_hydrolase_dom"/>
</dbReference>
<dbReference type="NCBIfam" id="TIGR00052">
    <property type="entry name" value="nudix-type nucleoside diphosphatase, YffH/AdpP family"/>
    <property type="match status" value="1"/>
</dbReference>
<dbReference type="NCBIfam" id="NF011585">
    <property type="entry name" value="PRK15009.1"/>
    <property type="match status" value="1"/>
</dbReference>
<dbReference type="PANTHER" id="PTHR11839:SF18">
    <property type="entry name" value="NUDIX HYDROLASE DOMAIN-CONTAINING PROTEIN"/>
    <property type="match status" value="1"/>
</dbReference>
<dbReference type="PANTHER" id="PTHR11839">
    <property type="entry name" value="UDP/ADP-SUGAR PYROPHOSPHATASE"/>
    <property type="match status" value="1"/>
</dbReference>
<dbReference type="Pfam" id="PF00293">
    <property type="entry name" value="NUDIX"/>
    <property type="match status" value="1"/>
</dbReference>
<dbReference type="SUPFAM" id="SSF55811">
    <property type="entry name" value="Nudix"/>
    <property type="match status" value="1"/>
</dbReference>
<dbReference type="PROSITE" id="PS51462">
    <property type="entry name" value="NUDIX"/>
    <property type="match status" value="1"/>
</dbReference>
<gene>
    <name type="primary">nudK</name>
    <name type="ordered locus">ESA_00783</name>
</gene>
<proteinExistence type="inferred from homology"/>
<reference key="1">
    <citation type="journal article" date="2010" name="PLoS ONE">
        <title>Genome sequence of Cronobacter sakazakii BAA-894 and comparative genomic hybridization analysis with other Cronobacter species.</title>
        <authorList>
            <person name="Kucerova E."/>
            <person name="Clifton S.W."/>
            <person name="Xia X.Q."/>
            <person name="Long F."/>
            <person name="Porwollik S."/>
            <person name="Fulton L."/>
            <person name="Fronick C."/>
            <person name="Minx P."/>
            <person name="Kyung K."/>
            <person name="Warren W."/>
            <person name="Fulton R."/>
            <person name="Feng D."/>
            <person name="Wollam A."/>
            <person name="Shah N."/>
            <person name="Bhonagiri V."/>
            <person name="Nash W.E."/>
            <person name="Hallsworth-Pepin K."/>
            <person name="Wilson R.K."/>
            <person name="McClelland M."/>
            <person name="Forsythe S.J."/>
        </authorList>
    </citation>
    <scope>NUCLEOTIDE SEQUENCE [LARGE SCALE GENOMIC DNA]</scope>
    <source>
        <strain>ATCC BAA-894</strain>
    </source>
</reference>
<protein>
    <recommendedName>
        <fullName>GDP-mannose pyrophosphatase</fullName>
        <ecNumber evidence="1">3.6.1.-</ecNumber>
    </recommendedName>
    <alternativeName>
        <fullName>GDP-mannose hydrolase</fullName>
    </alternativeName>
    <alternativeName>
        <fullName>GDPMK</fullName>
    </alternativeName>
</protein>
<comment type="function">
    <text evidence="1">Nucleoside diphosphate sugar hydrolase that hydrolyzes GDP-mannose as its preferred substrate, yielding GMP and mannose-1-phosphate.</text>
</comment>
<comment type="catalytic activity">
    <reaction evidence="1">
        <text>GDP-alpha-D-mannose + H2O = alpha-D-mannose 1-phosphate + GMP + 2 H(+)</text>
        <dbReference type="Rhea" id="RHEA:27978"/>
        <dbReference type="ChEBI" id="CHEBI:15377"/>
        <dbReference type="ChEBI" id="CHEBI:15378"/>
        <dbReference type="ChEBI" id="CHEBI:57527"/>
        <dbReference type="ChEBI" id="CHEBI:58115"/>
        <dbReference type="ChEBI" id="CHEBI:58409"/>
    </reaction>
</comment>
<comment type="cofactor">
    <cofactor evidence="1">
        <name>Mg(2+)</name>
        <dbReference type="ChEBI" id="CHEBI:18420"/>
    </cofactor>
</comment>
<comment type="subunit">
    <text evidence="1">Homodimer.</text>
</comment>
<comment type="domain">
    <text evidence="1">In the dimer, the N-terminal domains are swapped between the two monomers, such that residues of both chains contribute to the active site.</text>
</comment>
<comment type="similarity">
    <text evidence="3">Belongs to the Nudix hydrolase family. NudK subfamily.</text>
</comment>
<accession>A7ML00</accession>
<keyword id="KW-0378">Hydrolase</keyword>
<keyword id="KW-0460">Magnesium</keyword>
<keyword id="KW-0479">Metal-binding</keyword>
<keyword id="KW-1185">Reference proteome</keyword>